<feature type="chain" id="PRO_0000211284" description="Translationally-controlled tumor protein homolog">
    <location>
        <begin position="1"/>
        <end position="173"/>
    </location>
</feature>
<feature type="domain" description="TCTP" evidence="2">
    <location>
        <begin position="1"/>
        <end position="173"/>
    </location>
</feature>
<reference key="1">
    <citation type="journal article" date="2006" name="Insect Biochem. Mol. Biol.">
        <title>An annotated catalog of salivary gland transcripts from Ixodes scapularis ticks.</title>
        <authorList>
            <person name="Ribeiro J.M.C."/>
            <person name="Alarcon-Chaidez F."/>
            <person name="Francischetti I.M.B."/>
            <person name="Mans B.J."/>
            <person name="Mather T.N."/>
            <person name="Valenzuela J.G."/>
            <person name="Wikel S.K."/>
        </authorList>
    </citation>
    <scope>NUCLEOTIDE SEQUENCE [LARGE SCALE MRNA]</scope>
    <source>
        <strain>IS-6-12-J-cluster-559</strain>
        <tissue>Salivary gland</tissue>
    </source>
</reference>
<protein>
    <recommendedName>
        <fullName>Translationally-controlled tumor protein homolog</fullName>
        <shortName>TCTP</shortName>
    </recommendedName>
</protein>
<organism>
    <name type="scientific">Ixodes scapularis</name>
    <name type="common">Black-legged tick</name>
    <name type="synonym">Deer tick</name>
    <dbReference type="NCBI Taxonomy" id="6945"/>
    <lineage>
        <taxon>Eukaryota</taxon>
        <taxon>Metazoa</taxon>
        <taxon>Ecdysozoa</taxon>
        <taxon>Arthropoda</taxon>
        <taxon>Chelicerata</taxon>
        <taxon>Arachnida</taxon>
        <taxon>Acari</taxon>
        <taxon>Parasitiformes</taxon>
        <taxon>Ixodida</taxon>
        <taxon>Ixodoidea</taxon>
        <taxon>Ixodidae</taxon>
        <taxon>Ixodinae</taxon>
        <taxon>Ixodes</taxon>
    </lineage>
</organism>
<proteinExistence type="evidence at transcript level"/>
<sequence length="173" mass="19428">MLLFKDILTGDEMFTDSVKYKLVDDCIFEIECEHVTRKVGEVALDGANPSAEEVEEGTEEGTESGLDLVLNMRLVETGFSKTDYKNYLKTYTKALMDKWKEDGKSEAEVNEAKSKLTEAVKKVLPRIGDMQFFLGESSNPDGIVALLEYRPNKSGGETPVVMFFKHGLLEEKQ</sequence>
<accession>Q4PLZ3</accession>
<comment type="function">
    <text evidence="1">Involved in calcium binding and microtubule stabilization.</text>
</comment>
<comment type="subcellular location">
    <subcellularLocation>
        <location evidence="1">Cytoplasm</location>
    </subcellularLocation>
</comment>
<comment type="similarity">
    <text evidence="2">Belongs to the TCTP family.</text>
</comment>
<gene>
    <name type="primary">Tctp</name>
</gene>
<dbReference type="EMBL" id="DQ066335">
    <property type="protein sequence ID" value="AAY66972.1"/>
    <property type="molecule type" value="mRNA"/>
</dbReference>
<dbReference type="SMR" id="Q4PLZ3"/>
<dbReference type="FunCoup" id="Q4PLZ3">
    <property type="interactions" value="1199"/>
</dbReference>
<dbReference type="EnsemblMetazoa" id="ISCI024497-RA">
    <property type="protein sequence ID" value="ISCI024497-PA"/>
    <property type="gene ID" value="ISCI024497"/>
</dbReference>
<dbReference type="VEuPathDB" id="VectorBase:ISCI024497"/>
<dbReference type="VEuPathDB" id="VectorBase:ISCP_034545"/>
<dbReference type="VEuPathDB" id="VectorBase:ISCW024497"/>
<dbReference type="HOGENOM" id="CLU_1612701_0_0_1"/>
<dbReference type="InParanoid" id="Q4PLZ3"/>
<dbReference type="OrthoDB" id="10248936at2759"/>
<dbReference type="Proteomes" id="UP000001555">
    <property type="component" value="Unplaced"/>
</dbReference>
<dbReference type="GO" id="GO:0005737">
    <property type="term" value="C:cytoplasm"/>
    <property type="evidence" value="ECO:0000318"/>
    <property type="project" value="GO_Central"/>
</dbReference>
<dbReference type="GO" id="GO:0005509">
    <property type="term" value="F:calcium ion binding"/>
    <property type="evidence" value="ECO:0000318"/>
    <property type="project" value="GO_Central"/>
</dbReference>
<dbReference type="FunFam" id="2.170.150.10:FF:000010">
    <property type="entry name" value="Translationally-controlled tumor protein homolog"/>
    <property type="match status" value="1"/>
</dbReference>
<dbReference type="Gene3D" id="2.170.150.10">
    <property type="entry name" value="Metal Binding Protein, Guanine Nucleotide Exchange Factor, Chain A"/>
    <property type="match status" value="1"/>
</dbReference>
<dbReference type="InterPro" id="IPR011057">
    <property type="entry name" value="Mss4-like_sf"/>
</dbReference>
<dbReference type="InterPro" id="IPR011323">
    <property type="entry name" value="Mss4/transl-control_tumour"/>
</dbReference>
<dbReference type="InterPro" id="IPR034737">
    <property type="entry name" value="TCTP"/>
</dbReference>
<dbReference type="InterPro" id="IPR018103">
    <property type="entry name" value="Translation_control_tumour_CS"/>
</dbReference>
<dbReference type="InterPro" id="IPR018105">
    <property type="entry name" value="Translational_control_tumour_p"/>
</dbReference>
<dbReference type="PANTHER" id="PTHR11991">
    <property type="entry name" value="TRANSLATIONALLY CONTROLLED TUMOR PROTEIN-RELATED"/>
    <property type="match status" value="1"/>
</dbReference>
<dbReference type="PANTHER" id="PTHR11991:SF0">
    <property type="entry name" value="TRANSLATIONALLY-CONTROLLED TUMOR PROTEIN"/>
    <property type="match status" value="1"/>
</dbReference>
<dbReference type="Pfam" id="PF00838">
    <property type="entry name" value="TCTP"/>
    <property type="match status" value="1"/>
</dbReference>
<dbReference type="PRINTS" id="PR01653">
    <property type="entry name" value="TCTPROTEIN"/>
</dbReference>
<dbReference type="SUPFAM" id="SSF51316">
    <property type="entry name" value="Mss4-like"/>
    <property type="match status" value="1"/>
</dbReference>
<dbReference type="PROSITE" id="PS01002">
    <property type="entry name" value="TCTP_1"/>
    <property type="match status" value="1"/>
</dbReference>
<dbReference type="PROSITE" id="PS51797">
    <property type="entry name" value="TCTP_3"/>
    <property type="match status" value="1"/>
</dbReference>
<name>TCTP_IXOSC</name>
<evidence type="ECO:0000250" key="1"/>
<evidence type="ECO:0000255" key="2">
    <source>
        <dbReference type="PROSITE-ProRule" id="PRU01133"/>
    </source>
</evidence>
<keyword id="KW-0106">Calcium</keyword>
<keyword id="KW-0963">Cytoplasm</keyword>
<keyword id="KW-1185">Reference proteome</keyword>